<reference key="1">
    <citation type="journal article" date="2002" name="Plant Mol. Biol.">
        <title>Probing the diversity of the Arabidopsis glutathione S-transferase gene family.</title>
        <authorList>
            <person name="Wagner U."/>
            <person name="Edwards R."/>
            <person name="Dixon D.P."/>
            <person name="Mauch F."/>
        </authorList>
    </citation>
    <scope>NUCLEOTIDE SEQUENCE [MRNA]</scope>
    <scope>GENE FAMILY</scope>
    <scope>NOMENCLATURE</scope>
    <source>
        <strain>cv. Columbia</strain>
    </source>
</reference>
<reference key="2">
    <citation type="journal article" date="1999" name="Nature">
        <title>Sequence and analysis of chromosome 2 of the plant Arabidopsis thaliana.</title>
        <authorList>
            <person name="Lin X."/>
            <person name="Kaul S."/>
            <person name="Rounsley S.D."/>
            <person name="Shea T.P."/>
            <person name="Benito M.-I."/>
            <person name="Town C.D."/>
            <person name="Fujii C.Y."/>
            <person name="Mason T.M."/>
            <person name="Bowman C.L."/>
            <person name="Barnstead M.E."/>
            <person name="Feldblyum T.V."/>
            <person name="Buell C.R."/>
            <person name="Ketchum K.A."/>
            <person name="Lee J.J."/>
            <person name="Ronning C.M."/>
            <person name="Koo H.L."/>
            <person name="Moffat K.S."/>
            <person name="Cronin L.A."/>
            <person name="Shen M."/>
            <person name="Pai G."/>
            <person name="Van Aken S."/>
            <person name="Umayam L."/>
            <person name="Tallon L.J."/>
            <person name="Gill J.E."/>
            <person name="Adams M.D."/>
            <person name="Carrera A.J."/>
            <person name="Creasy T.H."/>
            <person name="Goodman H.M."/>
            <person name="Somerville C.R."/>
            <person name="Copenhaver G.P."/>
            <person name="Preuss D."/>
            <person name="Nierman W.C."/>
            <person name="White O."/>
            <person name="Eisen J.A."/>
            <person name="Salzberg S.L."/>
            <person name="Fraser C.M."/>
            <person name="Venter J.C."/>
        </authorList>
    </citation>
    <scope>NUCLEOTIDE SEQUENCE [LARGE SCALE GENOMIC DNA]</scope>
    <source>
        <strain>cv. Columbia</strain>
    </source>
</reference>
<reference key="3">
    <citation type="journal article" date="2017" name="Plant J.">
        <title>Araport11: a complete reannotation of the Arabidopsis thaliana reference genome.</title>
        <authorList>
            <person name="Cheng C.Y."/>
            <person name="Krishnakumar V."/>
            <person name="Chan A.P."/>
            <person name="Thibaud-Nissen F."/>
            <person name="Schobel S."/>
            <person name="Town C.D."/>
        </authorList>
    </citation>
    <scope>GENOME REANNOTATION</scope>
    <source>
        <strain>cv. Columbia</strain>
    </source>
</reference>
<reference key="4">
    <citation type="journal article" date="2003" name="Science">
        <title>Empirical analysis of transcriptional activity in the Arabidopsis genome.</title>
        <authorList>
            <person name="Yamada K."/>
            <person name="Lim J."/>
            <person name="Dale J.M."/>
            <person name="Chen H."/>
            <person name="Shinn P."/>
            <person name="Palm C.J."/>
            <person name="Southwick A.M."/>
            <person name="Wu H.C."/>
            <person name="Kim C.J."/>
            <person name="Nguyen M."/>
            <person name="Pham P.K."/>
            <person name="Cheuk R.F."/>
            <person name="Karlin-Newmann G."/>
            <person name="Liu S.X."/>
            <person name="Lam B."/>
            <person name="Sakano H."/>
            <person name="Wu T."/>
            <person name="Yu G."/>
            <person name="Miranda M."/>
            <person name="Quach H.L."/>
            <person name="Tripp M."/>
            <person name="Chang C.H."/>
            <person name="Lee J.M."/>
            <person name="Toriumi M.J."/>
            <person name="Chan M.M."/>
            <person name="Tang C.C."/>
            <person name="Onodera C.S."/>
            <person name="Deng J.M."/>
            <person name="Akiyama K."/>
            <person name="Ansari Y."/>
            <person name="Arakawa T."/>
            <person name="Banh J."/>
            <person name="Banno F."/>
            <person name="Bowser L."/>
            <person name="Brooks S.Y."/>
            <person name="Carninci P."/>
            <person name="Chao Q."/>
            <person name="Choy N."/>
            <person name="Enju A."/>
            <person name="Goldsmith A.D."/>
            <person name="Gurjal M."/>
            <person name="Hansen N.F."/>
            <person name="Hayashizaki Y."/>
            <person name="Johnson-Hopson C."/>
            <person name="Hsuan V.W."/>
            <person name="Iida K."/>
            <person name="Karnes M."/>
            <person name="Khan S."/>
            <person name="Koesema E."/>
            <person name="Ishida J."/>
            <person name="Jiang P.X."/>
            <person name="Jones T."/>
            <person name="Kawai J."/>
            <person name="Kamiya A."/>
            <person name="Meyers C."/>
            <person name="Nakajima M."/>
            <person name="Narusaka M."/>
            <person name="Seki M."/>
            <person name="Sakurai T."/>
            <person name="Satou M."/>
            <person name="Tamse R."/>
            <person name="Vaysberg M."/>
            <person name="Wallender E.K."/>
            <person name="Wong C."/>
            <person name="Yamamura Y."/>
            <person name="Yuan S."/>
            <person name="Shinozaki K."/>
            <person name="Davis R.W."/>
            <person name="Theologis A."/>
            <person name="Ecker J.R."/>
        </authorList>
    </citation>
    <scope>NUCLEOTIDE SEQUENCE [LARGE SCALE MRNA]</scope>
    <source>
        <strain>cv. Columbia</strain>
    </source>
</reference>
<reference key="5">
    <citation type="journal article" date="2009" name="J. Proteomics">
        <title>Phosphoproteomic analysis of nuclei-enriched fractions from Arabidopsis thaliana.</title>
        <authorList>
            <person name="Jones A.M.E."/>
            <person name="MacLean D."/>
            <person name="Studholme D.J."/>
            <person name="Serna-Sanz A."/>
            <person name="Andreasson E."/>
            <person name="Rathjen J.P."/>
            <person name="Peck S.C."/>
        </authorList>
    </citation>
    <scope>PHOSPHORYLATION [LARGE SCALE ANALYSIS] AT THR-151</scope>
    <scope>IDENTIFICATION BY MASS SPECTROMETRY [LARGE SCALE ANALYSIS]</scope>
    <source>
        <strain>cv. Columbia</strain>
    </source>
</reference>
<evidence type="ECO:0000250" key="1"/>
<evidence type="ECO:0000305" key="2"/>
<evidence type="ECO:0007744" key="3">
    <source>
    </source>
</evidence>
<accession>Q9ZW27</accession>
<accession>Q94EZ8</accession>
<sequence length="224" mass="25839">MAEKEEDVKLLGFWASPFTRRVEMAFKLKGVPYEYLEQDIVNKSPLLLQINPVYKKVPVLVYKGKILSESHVILEYIDQIWKNNPILPQDPYEKAMALFWAKFVDEQVGPVAFMSVAKAEKGVEVAIKEAQELFMFLEKEVTGKDFFGGKTIGFLDLVAGSMIPFCLARGWEGMGIDMIPEEKFPELNRWIKNLKEIEIVRECIPPREEQIEHMKKVVERIKSA</sequence>
<gene>
    <name type="primary">GSTU4</name>
    <name type="synonym">GST22</name>
    <name type="ordered locus">At2g29460</name>
    <name type="ORF">F16P2.16</name>
</gene>
<organism>
    <name type="scientific">Arabidopsis thaliana</name>
    <name type="common">Mouse-ear cress</name>
    <dbReference type="NCBI Taxonomy" id="3702"/>
    <lineage>
        <taxon>Eukaryota</taxon>
        <taxon>Viridiplantae</taxon>
        <taxon>Streptophyta</taxon>
        <taxon>Embryophyta</taxon>
        <taxon>Tracheophyta</taxon>
        <taxon>Spermatophyta</taxon>
        <taxon>Magnoliopsida</taxon>
        <taxon>eudicotyledons</taxon>
        <taxon>Gunneridae</taxon>
        <taxon>Pentapetalae</taxon>
        <taxon>rosids</taxon>
        <taxon>malvids</taxon>
        <taxon>Brassicales</taxon>
        <taxon>Brassicaceae</taxon>
        <taxon>Camelineae</taxon>
        <taxon>Arabidopsis</taxon>
    </lineage>
</organism>
<feature type="chain" id="PRO_0000413551" description="Glutathione S-transferase U4">
    <location>
        <begin position="1"/>
        <end position="224"/>
    </location>
</feature>
<feature type="domain" description="GST N-terminal">
    <location>
        <begin position="6"/>
        <end position="85"/>
    </location>
</feature>
<feature type="domain" description="GST C-terminal">
    <location>
        <begin position="90"/>
        <end position="217"/>
    </location>
</feature>
<feature type="binding site" evidence="1">
    <location>
        <begin position="16"/>
        <end position="17"/>
    </location>
    <ligand>
        <name>glutathione</name>
        <dbReference type="ChEBI" id="CHEBI:57925"/>
    </ligand>
</feature>
<feature type="binding site" evidence="1">
    <location>
        <begin position="42"/>
        <end position="43"/>
    </location>
    <ligand>
        <name>glutathione</name>
        <dbReference type="ChEBI" id="CHEBI:57925"/>
    </ligand>
</feature>
<feature type="binding site" evidence="1">
    <location>
        <begin position="56"/>
        <end position="57"/>
    </location>
    <ligand>
        <name>glutathione</name>
        <dbReference type="ChEBI" id="CHEBI:57925"/>
    </ligand>
</feature>
<feature type="binding site" evidence="1">
    <location>
        <begin position="69"/>
        <end position="70"/>
    </location>
    <ligand>
        <name>glutathione</name>
        <dbReference type="ChEBI" id="CHEBI:57925"/>
    </ligand>
</feature>
<feature type="modified residue" description="Phosphothreonine" evidence="3">
    <location>
        <position position="151"/>
    </location>
</feature>
<feature type="sequence conflict" description="In Ref. 4; AAK62449/AAO30062." evidence="2" ref="4">
    <original>G</original>
    <variation>D</variation>
    <location>
        <position position="173"/>
    </location>
</feature>
<protein>
    <recommendedName>
        <fullName>Glutathione S-transferase U4</fullName>
        <shortName>AtGSTU4</shortName>
        <ecNumber>2.5.1.18</ecNumber>
    </recommendedName>
    <alternativeName>
        <fullName>GST class-tau member 4</fullName>
    </alternativeName>
    <alternativeName>
        <fullName>Glutathione S-transferase 22</fullName>
    </alternativeName>
</protein>
<name>GSTU4_ARATH</name>
<dbReference type="EC" id="2.5.1.18"/>
<dbReference type="EMBL" id="AF288186">
    <property type="protein sequence ID" value="AAG30135.1"/>
    <property type="molecule type" value="mRNA"/>
</dbReference>
<dbReference type="EMBL" id="AC004561">
    <property type="protein sequence ID" value="AAC95192.1"/>
    <property type="molecule type" value="Genomic_DNA"/>
</dbReference>
<dbReference type="EMBL" id="CP002685">
    <property type="protein sequence ID" value="AEC08257.1"/>
    <property type="molecule type" value="Genomic_DNA"/>
</dbReference>
<dbReference type="EMBL" id="AF387004">
    <property type="protein sequence ID" value="AAK62449.1"/>
    <property type="molecule type" value="mRNA"/>
</dbReference>
<dbReference type="EMBL" id="BT003399">
    <property type="protein sequence ID" value="AAO30062.1"/>
    <property type="molecule type" value="mRNA"/>
</dbReference>
<dbReference type="PIR" id="F84696">
    <property type="entry name" value="F84696"/>
</dbReference>
<dbReference type="RefSeq" id="NP_180507.1">
    <property type="nucleotide sequence ID" value="NM_128500.4"/>
</dbReference>
<dbReference type="SMR" id="Q9ZW27"/>
<dbReference type="ComplexPortal" id="CPX-2833">
    <property type="entry name" value="Camalexin biosynthetic metabolon complex"/>
</dbReference>
<dbReference type="FunCoup" id="Q9ZW27">
    <property type="interactions" value="151"/>
</dbReference>
<dbReference type="IntAct" id="Q9ZW27">
    <property type="interactions" value="3"/>
</dbReference>
<dbReference type="STRING" id="3702.Q9ZW27"/>
<dbReference type="iPTMnet" id="Q9ZW27"/>
<dbReference type="PaxDb" id="3702-AT2G29460.1"/>
<dbReference type="ProteomicsDB" id="247303"/>
<dbReference type="EnsemblPlants" id="AT2G29460.1">
    <property type="protein sequence ID" value="AT2G29460.1"/>
    <property type="gene ID" value="AT2G29460"/>
</dbReference>
<dbReference type="GeneID" id="817495"/>
<dbReference type="Gramene" id="AT2G29460.1">
    <property type="protein sequence ID" value="AT2G29460.1"/>
    <property type="gene ID" value="AT2G29460"/>
</dbReference>
<dbReference type="KEGG" id="ath:AT2G29460"/>
<dbReference type="Araport" id="AT2G29460"/>
<dbReference type="TAIR" id="AT2G29460">
    <property type="gene designation" value="GSTU4"/>
</dbReference>
<dbReference type="eggNOG" id="KOG0406">
    <property type="taxonomic scope" value="Eukaryota"/>
</dbReference>
<dbReference type="HOGENOM" id="CLU_011226_18_2_1"/>
<dbReference type="InParanoid" id="Q9ZW27"/>
<dbReference type="OMA" id="WEGMEID"/>
<dbReference type="PhylomeDB" id="Q9ZW27"/>
<dbReference type="BioCyc" id="ARA:AT2G29460-MONOMER"/>
<dbReference type="BRENDA" id="2.5.1.18">
    <property type="organism ID" value="399"/>
</dbReference>
<dbReference type="PRO" id="PR:Q9ZW27"/>
<dbReference type="Proteomes" id="UP000006548">
    <property type="component" value="Chromosome 2"/>
</dbReference>
<dbReference type="ExpressionAtlas" id="Q9ZW27">
    <property type="expression patterns" value="baseline and differential"/>
</dbReference>
<dbReference type="GO" id="GO:0005737">
    <property type="term" value="C:cytoplasm"/>
    <property type="evidence" value="ECO:0000303"/>
    <property type="project" value="TAIR"/>
</dbReference>
<dbReference type="GO" id="GO:0005829">
    <property type="term" value="C:cytosol"/>
    <property type="evidence" value="ECO:0007669"/>
    <property type="project" value="UniProtKB-SubCell"/>
</dbReference>
<dbReference type="GO" id="GO:0004364">
    <property type="term" value="F:glutathione transferase activity"/>
    <property type="evidence" value="ECO:0007669"/>
    <property type="project" value="UniProtKB-EC"/>
</dbReference>
<dbReference type="GO" id="GO:0006749">
    <property type="term" value="P:glutathione metabolic process"/>
    <property type="evidence" value="ECO:0007669"/>
    <property type="project" value="InterPro"/>
</dbReference>
<dbReference type="GO" id="GO:1900367">
    <property type="term" value="P:positive regulation of defense response to insect"/>
    <property type="evidence" value="ECO:0000315"/>
    <property type="project" value="TAIR"/>
</dbReference>
<dbReference type="GO" id="GO:0009407">
    <property type="term" value="P:toxin catabolic process"/>
    <property type="evidence" value="ECO:0000304"/>
    <property type="project" value="TAIR"/>
</dbReference>
<dbReference type="CDD" id="cd03185">
    <property type="entry name" value="GST_C_Tau"/>
    <property type="match status" value="1"/>
</dbReference>
<dbReference type="CDD" id="cd03058">
    <property type="entry name" value="GST_N_Tau"/>
    <property type="match status" value="1"/>
</dbReference>
<dbReference type="FunFam" id="1.20.1050.10:FF:000012">
    <property type="entry name" value="Tau class glutathione S-transferase"/>
    <property type="match status" value="1"/>
</dbReference>
<dbReference type="FunFam" id="3.40.30.10:FF:000014">
    <property type="entry name" value="Tau class glutathione S-transferase"/>
    <property type="match status" value="1"/>
</dbReference>
<dbReference type="Gene3D" id="1.20.1050.10">
    <property type="match status" value="1"/>
</dbReference>
<dbReference type="Gene3D" id="3.40.30.10">
    <property type="entry name" value="Glutaredoxin"/>
    <property type="match status" value="1"/>
</dbReference>
<dbReference type="InterPro" id="IPR010987">
    <property type="entry name" value="Glutathione-S-Trfase_C-like"/>
</dbReference>
<dbReference type="InterPro" id="IPR036282">
    <property type="entry name" value="Glutathione-S-Trfase_C_sf"/>
</dbReference>
<dbReference type="InterPro" id="IPR004045">
    <property type="entry name" value="Glutathione_S-Trfase_N"/>
</dbReference>
<dbReference type="InterPro" id="IPR004046">
    <property type="entry name" value="GST_C"/>
</dbReference>
<dbReference type="InterPro" id="IPR045074">
    <property type="entry name" value="GST_C_Tau"/>
</dbReference>
<dbReference type="InterPro" id="IPR045073">
    <property type="entry name" value="Omega/Tau-like"/>
</dbReference>
<dbReference type="InterPro" id="IPR036249">
    <property type="entry name" value="Thioredoxin-like_sf"/>
</dbReference>
<dbReference type="PANTHER" id="PTHR11260:SF626">
    <property type="entry name" value="GLUTATHIONE S-TRANSFERASE U4"/>
    <property type="match status" value="1"/>
</dbReference>
<dbReference type="PANTHER" id="PTHR11260">
    <property type="entry name" value="GLUTATHIONE S-TRANSFERASE, GST, SUPERFAMILY, GST DOMAIN CONTAINING"/>
    <property type="match status" value="1"/>
</dbReference>
<dbReference type="Pfam" id="PF00043">
    <property type="entry name" value="GST_C"/>
    <property type="match status" value="1"/>
</dbReference>
<dbReference type="Pfam" id="PF02798">
    <property type="entry name" value="GST_N"/>
    <property type="match status" value="1"/>
</dbReference>
<dbReference type="SFLD" id="SFLDG01152">
    <property type="entry name" value="Main.3:_Omega-_and_Tau-like"/>
    <property type="match status" value="1"/>
</dbReference>
<dbReference type="SFLD" id="SFLDG00358">
    <property type="entry name" value="Main_(cytGST)"/>
    <property type="match status" value="1"/>
</dbReference>
<dbReference type="SUPFAM" id="SSF47616">
    <property type="entry name" value="GST C-terminal domain-like"/>
    <property type="match status" value="1"/>
</dbReference>
<dbReference type="SUPFAM" id="SSF52833">
    <property type="entry name" value="Thioredoxin-like"/>
    <property type="match status" value="1"/>
</dbReference>
<dbReference type="PROSITE" id="PS50405">
    <property type="entry name" value="GST_CTER"/>
    <property type="match status" value="1"/>
</dbReference>
<dbReference type="PROSITE" id="PS50404">
    <property type="entry name" value="GST_NTER"/>
    <property type="match status" value="1"/>
</dbReference>
<comment type="function">
    <text evidence="1">May be involved in the conjugation of reduced glutathione to a wide number of exogenous and endogenous hydrophobic electrophiles and have a detoxification role against certain herbicides.</text>
</comment>
<comment type="catalytic activity">
    <reaction>
        <text>RX + glutathione = an S-substituted glutathione + a halide anion + H(+)</text>
        <dbReference type="Rhea" id="RHEA:16437"/>
        <dbReference type="ChEBI" id="CHEBI:15378"/>
        <dbReference type="ChEBI" id="CHEBI:16042"/>
        <dbReference type="ChEBI" id="CHEBI:17792"/>
        <dbReference type="ChEBI" id="CHEBI:57925"/>
        <dbReference type="ChEBI" id="CHEBI:90779"/>
        <dbReference type="EC" id="2.5.1.18"/>
    </reaction>
</comment>
<comment type="interaction">
    <interactant intactId="EBI-30856456">
        <id>Q9ZW27</id>
    </interactant>
    <interactant intactId="EBI-2356153">
        <id>O49342</id>
        <label>CYP71A13</label>
    </interactant>
    <organismsDiffer>false</organismsDiffer>
    <experiments>3</experiments>
</comment>
<comment type="subcellular location">
    <subcellularLocation>
        <location evidence="2">Cytoplasm</location>
        <location evidence="2">Cytosol</location>
    </subcellularLocation>
</comment>
<comment type="similarity">
    <text evidence="2">Belongs to the GST superfamily. Tau family.</text>
</comment>
<keyword id="KW-0963">Cytoplasm</keyword>
<keyword id="KW-0216">Detoxification</keyword>
<keyword id="KW-0597">Phosphoprotein</keyword>
<keyword id="KW-1185">Reference proteome</keyword>
<keyword id="KW-0808">Transferase</keyword>
<proteinExistence type="evidence at protein level"/>